<gene>
    <name evidence="1" type="primary">rpsO</name>
    <name type="ordered locus">AHA_3300</name>
</gene>
<organism>
    <name type="scientific">Aeromonas hydrophila subsp. hydrophila (strain ATCC 7966 / DSM 30187 / BCRC 13018 / CCUG 14551 / JCM 1027 / KCTC 2358 / NCIMB 9240 / NCTC 8049)</name>
    <dbReference type="NCBI Taxonomy" id="380703"/>
    <lineage>
        <taxon>Bacteria</taxon>
        <taxon>Pseudomonadati</taxon>
        <taxon>Pseudomonadota</taxon>
        <taxon>Gammaproteobacteria</taxon>
        <taxon>Aeromonadales</taxon>
        <taxon>Aeromonadaceae</taxon>
        <taxon>Aeromonas</taxon>
    </lineage>
</organism>
<accession>A0KNE0</accession>
<name>RS15_AERHH</name>
<proteinExistence type="inferred from homology"/>
<dbReference type="EMBL" id="CP000462">
    <property type="protein sequence ID" value="ABK37022.1"/>
    <property type="molecule type" value="Genomic_DNA"/>
</dbReference>
<dbReference type="RefSeq" id="WP_005298162.1">
    <property type="nucleotide sequence ID" value="NC_008570.1"/>
</dbReference>
<dbReference type="RefSeq" id="YP_857791.1">
    <property type="nucleotide sequence ID" value="NC_008570.1"/>
</dbReference>
<dbReference type="SMR" id="A0KNE0"/>
<dbReference type="STRING" id="380703.AHA_3300"/>
<dbReference type="EnsemblBacteria" id="ABK37022">
    <property type="protein sequence ID" value="ABK37022"/>
    <property type="gene ID" value="AHA_3300"/>
</dbReference>
<dbReference type="GeneID" id="47844354"/>
<dbReference type="KEGG" id="aha:AHA_3300"/>
<dbReference type="PATRIC" id="fig|380703.7.peg.3296"/>
<dbReference type="eggNOG" id="COG0184">
    <property type="taxonomic scope" value="Bacteria"/>
</dbReference>
<dbReference type="HOGENOM" id="CLU_148518_0_0_6"/>
<dbReference type="OrthoDB" id="9799262at2"/>
<dbReference type="PRO" id="PR:A0KNE0"/>
<dbReference type="Proteomes" id="UP000000756">
    <property type="component" value="Chromosome"/>
</dbReference>
<dbReference type="GO" id="GO:0022627">
    <property type="term" value="C:cytosolic small ribosomal subunit"/>
    <property type="evidence" value="ECO:0007669"/>
    <property type="project" value="TreeGrafter"/>
</dbReference>
<dbReference type="GO" id="GO:0019843">
    <property type="term" value="F:rRNA binding"/>
    <property type="evidence" value="ECO:0007669"/>
    <property type="project" value="UniProtKB-UniRule"/>
</dbReference>
<dbReference type="GO" id="GO:0003735">
    <property type="term" value="F:structural constituent of ribosome"/>
    <property type="evidence" value="ECO:0007669"/>
    <property type="project" value="InterPro"/>
</dbReference>
<dbReference type="GO" id="GO:0006412">
    <property type="term" value="P:translation"/>
    <property type="evidence" value="ECO:0007669"/>
    <property type="project" value="UniProtKB-UniRule"/>
</dbReference>
<dbReference type="CDD" id="cd00353">
    <property type="entry name" value="Ribosomal_S15p_S13e"/>
    <property type="match status" value="1"/>
</dbReference>
<dbReference type="FunFam" id="1.10.287.10:FF:000002">
    <property type="entry name" value="30S ribosomal protein S15"/>
    <property type="match status" value="1"/>
</dbReference>
<dbReference type="Gene3D" id="6.10.250.3130">
    <property type="match status" value="1"/>
</dbReference>
<dbReference type="Gene3D" id="1.10.287.10">
    <property type="entry name" value="S15/NS1, RNA-binding"/>
    <property type="match status" value="1"/>
</dbReference>
<dbReference type="HAMAP" id="MF_01343_B">
    <property type="entry name" value="Ribosomal_uS15_B"/>
    <property type="match status" value="1"/>
</dbReference>
<dbReference type="InterPro" id="IPR000589">
    <property type="entry name" value="Ribosomal_uS15"/>
</dbReference>
<dbReference type="InterPro" id="IPR005290">
    <property type="entry name" value="Ribosomal_uS15_bac-type"/>
</dbReference>
<dbReference type="InterPro" id="IPR009068">
    <property type="entry name" value="uS15_NS1_RNA-bd_sf"/>
</dbReference>
<dbReference type="NCBIfam" id="TIGR00952">
    <property type="entry name" value="S15_bact"/>
    <property type="match status" value="1"/>
</dbReference>
<dbReference type="PANTHER" id="PTHR23321">
    <property type="entry name" value="RIBOSOMAL PROTEIN S15, BACTERIAL AND ORGANELLAR"/>
    <property type="match status" value="1"/>
</dbReference>
<dbReference type="PANTHER" id="PTHR23321:SF26">
    <property type="entry name" value="SMALL RIBOSOMAL SUBUNIT PROTEIN US15M"/>
    <property type="match status" value="1"/>
</dbReference>
<dbReference type="Pfam" id="PF00312">
    <property type="entry name" value="Ribosomal_S15"/>
    <property type="match status" value="1"/>
</dbReference>
<dbReference type="SMART" id="SM01387">
    <property type="entry name" value="Ribosomal_S15"/>
    <property type="match status" value="1"/>
</dbReference>
<dbReference type="SUPFAM" id="SSF47060">
    <property type="entry name" value="S15/NS1 RNA-binding domain"/>
    <property type="match status" value="1"/>
</dbReference>
<evidence type="ECO:0000255" key="1">
    <source>
        <dbReference type="HAMAP-Rule" id="MF_01343"/>
    </source>
</evidence>
<evidence type="ECO:0000305" key="2"/>
<protein>
    <recommendedName>
        <fullName evidence="1">Small ribosomal subunit protein uS15</fullName>
    </recommendedName>
    <alternativeName>
        <fullName evidence="2">30S ribosomal protein S15</fullName>
    </alternativeName>
</protein>
<sequence length="89" mass="10140">MSLNAEIKAQIVADNARCANDTGSPEVQVALLTAQINHLQGHFKEHSKDHHGRRGLLRMVSQRRKLLDYLKRKDVQRYAALIAKLGLRR</sequence>
<keyword id="KW-1185">Reference proteome</keyword>
<keyword id="KW-0687">Ribonucleoprotein</keyword>
<keyword id="KW-0689">Ribosomal protein</keyword>
<keyword id="KW-0694">RNA-binding</keyword>
<keyword id="KW-0699">rRNA-binding</keyword>
<reference key="1">
    <citation type="journal article" date="2006" name="J. Bacteriol.">
        <title>Genome sequence of Aeromonas hydrophila ATCC 7966T: jack of all trades.</title>
        <authorList>
            <person name="Seshadri R."/>
            <person name="Joseph S.W."/>
            <person name="Chopra A.K."/>
            <person name="Sha J."/>
            <person name="Shaw J."/>
            <person name="Graf J."/>
            <person name="Haft D.H."/>
            <person name="Wu M."/>
            <person name="Ren Q."/>
            <person name="Rosovitz M.J."/>
            <person name="Madupu R."/>
            <person name="Tallon L."/>
            <person name="Kim M."/>
            <person name="Jin S."/>
            <person name="Vuong H."/>
            <person name="Stine O.C."/>
            <person name="Ali A."/>
            <person name="Horneman A.J."/>
            <person name="Heidelberg J.F."/>
        </authorList>
    </citation>
    <scope>NUCLEOTIDE SEQUENCE [LARGE SCALE GENOMIC DNA]</scope>
    <source>
        <strain>ATCC 7966 / DSM 30187 / BCRC 13018 / CCUG 14551 / JCM 1027 / KCTC 2358 / NCIMB 9240 / NCTC 8049</strain>
    </source>
</reference>
<comment type="function">
    <text evidence="1">One of the primary rRNA binding proteins, it binds directly to 16S rRNA where it helps nucleate assembly of the platform of the 30S subunit by binding and bridging several RNA helices of the 16S rRNA.</text>
</comment>
<comment type="function">
    <text evidence="1">Forms an intersubunit bridge (bridge B4) with the 23S rRNA of the 50S subunit in the ribosome.</text>
</comment>
<comment type="subunit">
    <text evidence="1">Part of the 30S ribosomal subunit. Forms a bridge to the 50S subunit in the 70S ribosome, contacting the 23S rRNA.</text>
</comment>
<comment type="similarity">
    <text evidence="1">Belongs to the universal ribosomal protein uS15 family.</text>
</comment>
<feature type="chain" id="PRO_1000054742" description="Small ribosomal subunit protein uS15">
    <location>
        <begin position="1"/>
        <end position="89"/>
    </location>
</feature>